<evidence type="ECO:0000256" key="1">
    <source>
        <dbReference type="SAM" id="MobiDB-lite"/>
    </source>
</evidence>
<comment type="function">
    <text>The production of one phage particle requires 250 copies of PIP. During head maturation, PIP is cleaved to form the stable head constituent, internal peptide II.</text>
</comment>
<organismHost>
    <name type="scientific">Escherichia coli</name>
    <dbReference type="NCBI Taxonomy" id="562"/>
</organismHost>
<feature type="chain" id="PRO_0000003344" description="Prehead core component PIP">
    <location>
        <begin position="1"/>
        <end position="80"/>
    </location>
</feature>
<feature type="chain" id="PRO_0000003345" description="Internal peptide II">
    <location>
        <begin position="47"/>
        <end position="80"/>
    </location>
</feature>
<feature type="region of interest" description="Disordered" evidence="1">
    <location>
        <begin position="43"/>
        <end position="80"/>
    </location>
</feature>
<feature type="compositionally biased region" description="Acidic residues" evidence="1">
    <location>
        <begin position="46"/>
        <end position="64"/>
    </location>
</feature>
<feature type="site" description="Cleavage; by prohead core protease GP21">
    <location>
        <begin position="46"/>
        <end position="47"/>
    </location>
</feature>
<sequence>MEGLIEAIKSNDLVAARKLFAEAMAARTIDLIKEEKIAIARNFLIEGEEPEDEDEDEDDEDSDDKDDKKDEDSDEDEDDE</sequence>
<accession>P03720</accession>
<dbReference type="EMBL" id="X16055">
    <property type="protein sequence ID" value="CAA34191.1"/>
    <property type="molecule type" value="Genomic_DNA"/>
</dbReference>
<dbReference type="EMBL" id="AF158101">
    <property type="protein sequence ID" value="AAD42515.1"/>
    <property type="molecule type" value="Genomic_DNA"/>
</dbReference>
<dbReference type="EMBL" id="J02512">
    <property type="protein sequence ID" value="AAA32520.1"/>
    <property type="molecule type" value="Genomic_DNA"/>
</dbReference>
<dbReference type="EMBL" id="X01414">
    <property type="protein sequence ID" value="CAA25655.1"/>
    <property type="molecule type" value="Genomic_DNA"/>
</dbReference>
<dbReference type="PIR" id="A04347">
    <property type="entry name" value="HIBPT4"/>
</dbReference>
<dbReference type="RefSeq" id="NP_049783.1">
    <property type="nucleotide sequence ID" value="NC_000866.4"/>
</dbReference>
<dbReference type="SMR" id="P03720"/>
<dbReference type="GeneID" id="1258665"/>
<dbReference type="KEGG" id="vg:1258665"/>
<dbReference type="OrthoDB" id="26762at10239"/>
<dbReference type="Proteomes" id="UP000009087">
    <property type="component" value="Segment"/>
</dbReference>
<dbReference type="InterPro" id="IPR035114">
    <property type="entry name" value="GP67"/>
</dbReference>
<dbReference type="Pfam" id="PF17634">
    <property type="entry name" value="GP67"/>
    <property type="match status" value="1"/>
</dbReference>
<proteinExistence type="predicted"/>
<protein>
    <recommendedName>
        <fullName>Prehead core component PIP</fullName>
    </recommendedName>
    <alternativeName>
        <fullName>Protein Gp67</fullName>
    </alternativeName>
    <component>
        <recommendedName>
            <fullName>Internal peptide II</fullName>
        </recommendedName>
    </component>
</protein>
<gene>
    <name type="primary">67</name>
</gene>
<organism>
    <name type="scientific">Enterobacteria phage T4</name>
    <name type="common">Bacteriophage T4</name>
    <dbReference type="NCBI Taxonomy" id="10665"/>
    <lineage>
        <taxon>Viruses</taxon>
        <taxon>Duplodnaviria</taxon>
        <taxon>Heunggongvirae</taxon>
        <taxon>Uroviricota</taxon>
        <taxon>Caudoviricetes</taxon>
        <taxon>Straboviridae</taxon>
        <taxon>Tevenvirinae</taxon>
        <taxon>Tequatrovirus</taxon>
    </lineage>
</organism>
<name>VPIP_BPT4</name>
<reference key="1">
    <citation type="journal article" date="1982" name="J. Mol. Biol.">
        <title>Gene 67, a new, essential bacteriophage T4 head gene codes for a prehead core component, PIP. I. Genetic mapping and DNA sequence.</title>
        <authorList>
            <person name="Voelker T.A."/>
            <person name="Gafner J."/>
            <person name="Bickle T.A."/>
            <person name="Showe M.K."/>
        </authorList>
    </citation>
    <scope>NUCLEOTIDE SEQUENCE [GENOMIC DNA]</scope>
</reference>
<reference key="2">
    <citation type="journal article" date="2003" name="Microbiol. Mol. Biol. Rev.">
        <title>Bacteriophage T4 genome.</title>
        <authorList>
            <person name="Miller E.S."/>
            <person name="Kutter E."/>
            <person name="Mosig G."/>
            <person name="Arisaka F."/>
            <person name="Kunisawa T."/>
            <person name="Ruger W."/>
        </authorList>
    </citation>
    <scope>NUCLEOTIDE SEQUENCE [LARGE SCALE GENOMIC DNA]</scope>
</reference>
<reference key="3">
    <citation type="journal article" date="1989" name="Nucleic Acids Res.">
        <title>Nucleotide and deduced amino acid sequences of bacteriophage T4 gene 20.</title>
        <authorList>
            <person name="Marusich E.I."/>
            <person name="Mesyanzhinov V.V."/>
        </authorList>
    </citation>
    <scope>NUCLEOTIDE SEQUENCE [GENOMIC DNA] OF 1-3</scope>
    <source>
        <strain>D</strain>
    </source>
</reference>
<reference key="4">
    <citation type="journal article" date="1984" name="J. Mol. Biol.">
        <title>Gene 68, a new bacteriophage T4 gene which codes for the 17K prohead core protein is involved in head size determination.</title>
        <authorList>
            <person name="Keller B."/>
            <person name="Sengstag C."/>
            <person name="Kellenberger E."/>
            <person name="Bickle T.A."/>
        </authorList>
    </citation>
    <scope>NUCLEOTIDE SEQUENCE [GENOMIC DNA] OF 53-80</scope>
</reference>
<keyword id="KW-1185">Reference proteome</keyword>
<keyword id="KW-1188">Viral release from host cell</keyword>